<organism>
    <name type="scientific">Danio rerio</name>
    <name type="common">Zebrafish</name>
    <name type="synonym">Brachydanio rerio</name>
    <dbReference type="NCBI Taxonomy" id="7955"/>
    <lineage>
        <taxon>Eukaryota</taxon>
        <taxon>Metazoa</taxon>
        <taxon>Chordata</taxon>
        <taxon>Craniata</taxon>
        <taxon>Vertebrata</taxon>
        <taxon>Euteleostomi</taxon>
        <taxon>Actinopterygii</taxon>
        <taxon>Neopterygii</taxon>
        <taxon>Teleostei</taxon>
        <taxon>Ostariophysi</taxon>
        <taxon>Cypriniformes</taxon>
        <taxon>Danionidae</taxon>
        <taxon>Danioninae</taxon>
        <taxon>Danio</taxon>
    </lineage>
</organism>
<gene>
    <name type="primary">parpbp</name>
    <name type="synonym">pari</name>
    <name type="ORF">zgc:136263</name>
</gene>
<protein>
    <recommendedName>
        <fullName>PCNA-interacting partner</fullName>
        <shortName>PARI</shortName>
    </recommendedName>
    <alternativeName>
        <fullName>PARP-1 binding protein</fullName>
    </alternativeName>
    <alternativeName>
        <fullName>PARP1-binding protein</fullName>
        <shortName>PARPBP</shortName>
    </alternativeName>
</protein>
<name>PARI_DANRE</name>
<keyword id="KW-0963">Cytoplasm</keyword>
<keyword id="KW-0227">DNA damage</keyword>
<keyword id="KW-0234">DNA repair</keyword>
<keyword id="KW-0238">DNA-binding</keyword>
<keyword id="KW-0539">Nucleus</keyword>
<keyword id="KW-1185">Reference proteome</keyword>
<evidence type="ECO:0000250" key="1"/>
<evidence type="ECO:0000256" key="2">
    <source>
        <dbReference type="SAM" id="MobiDB-lite"/>
    </source>
</evidence>
<evidence type="ECO:0000305" key="3"/>
<accession>Q1RMA6</accession>
<feature type="chain" id="PRO_0000280273" description="PCNA-interacting partner">
    <location>
        <begin position="1"/>
        <end position="568"/>
    </location>
</feature>
<feature type="region of interest" description="Disordered" evidence="2">
    <location>
        <begin position="442"/>
        <end position="555"/>
    </location>
</feature>
<feature type="compositionally biased region" description="Polar residues" evidence="2">
    <location>
        <begin position="488"/>
        <end position="500"/>
    </location>
</feature>
<feature type="compositionally biased region" description="Basic and acidic residues" evidence="2">
    <location>
        <begin position="515"/>
        <end position="527"/>
    </location>
</feature>
<sequence length="568" mass="62469">MARVFRRECHRVLDSERTTIQGADGMLMVPQLAIAGVNKQERGDFGVALSEVLAVWKYFLLDKLQLSHKDIPLPQSYDLIRKEYDCFLKRTNTVDLIDVFSMFKELRLNEDPEEPLTTMQMFQFLFGENESSEKPSQPVCPATPSCKAADCSPQIQRVVRRVFCSYLDLLVNSKNDLALTYTLDNPNRSLGHTAFTDLRHAACDSASSLFLTVTSFVRAIQLGGKGYAPPESHPLRKHVKGLSEFLNFVDQCQDILGETPNPREAGCKLVSSIRAALVKGRSAGDPVYLAAEESTKSLKERIGQIHAMHTQSTVGTGISPARPKAYAINHATAYGGRETVKVLMALLDEEALALPCRNKAELLSEDHAALNGSTGACLLALYKSPEAPTGSSPKSLRNRVLSQQEHIKSKVVRPTIRSQFACTYKEEELPLNRVLEFPSTSQIPTCVHPAPKKASSESDNGMDNRFKEATNLRCEGPGQSALGEHSGNAWNQTGGKSTQPEPLRRATGTLKRKLANRECTEQGREENQPPQKRPPAKAATGGPGKRNNKAVSKKLIAGQGKLTGFFRL</sequence>
<comment type="function">
    <text evidence="1">Required to suppress inappropriate homologous recombination, thereby playing a central role DNA repair and in the maintenance of genomic stability.</text>
</comment>
<comment type="subcellular location">
    <subcellularLocation>
        <location evidence="1">Cytoplasm</location>
    </subcellularLocation>
    <subcellularLocation>
        <location evidence="1">Nucleus</location>
    </subcellularLocation>
    <text evidence="1">Localizes to chromatin.</text>
</comment>
<comment type="similarity">
    <text evidence="3">Belongs to the PARI family.</text>
</comment>
<dbReference type="EMBL" id="BC115059">
    <property type="protein sequence ID" value="AAI15060.1"/>
    <property type="molecule type" value="mRNA"/>
</dbReference>
<dbReference type="SMR" id="Q1RMA6"/>
<dbReference type="FunCoup" id="Q1RMA6">
    <property type="interactions" value="1162"/>
</dbReference>
<dbReference type="STRING" id="7955.ENSDARP00000041528"/>
<dbReference type="PaxDb" id="7955-ENSDARP00000041528"/>
<dbReference type="AGR" id="ZFIN:ZDB-GENE-060421-5714"/>
<dbReference type="ZFIN" id="ZDB-GENE-060421-5714">
    <property type="gene designation" value="parpbp"/>
</dbReference>
<dbReference type="eggNOG" id="ENOG502QR2U">
    <property type="taxonomic scope" value="Eukaryota"/>
</dbReference>
<dbReference type="InParanoid" id="Q1RMA6"/>
<dbReference type="PhylomeDB" id="Q1RMA6"/>
<dbReference type="PRO" id="PR:Q1RMA6"/>
<dbReference type="Proteomes" id="UP000000437">
    <property type="component" value="Unplaced"/>
</dbReference>
<dbReference type="GO" id="GO:0000785">
    <property type="term" value="C:chromatin"/>
    <property type="evidence" value="ECO:0000250"/>
    <property type="project" value="UniProtKB"/>
</dbReference>
<dbReference type="GO" id="GO:0005737">
    <property type="term" value="C:cytoplasm"/>
    <property type="evidence" value="ECO:0007669"/>
    <property type="project" value="UniProtKB-SubCell"/>
</dbReference>
<dbReference type="GO" id="GO:0005634">
    <property type="term" value="C:nucleus"/>
    <property type="evidence" value="ECO:0007669"/>
    <property type="project" value="UniProtKB-SubCell"/>
</dbReference>
<dbReference type="GO" id="GO:0003677">
    <property type="term" value="F:DNA binding"/>
    <property type="evidence" value="ECO:0007669"/>
    <property type="project" value="UniProtKB-KW"/>
</dbReference>
<dbReference type="GO" id="GO:0006281">
    <property type="term" value="P:DNA repair"/>
    <property type="evidence" value="ECO:0007669"/>
    <property type="project" value="UniProtKB-KW"/>
</dbReference>
<dbReference type="GO" id="GO:2000042">
    <property type="term" value="P:negative regulation of double-strand break repair via homologous recombination"/>
    <property type="evidence" value="ECO:0000250"/>
    <property type="project" value="UniProtKB"/>
</dbReference>
<dbReference type="Gene3D" id="1.10.486.10">
    <property type="entry name" value="PCRA, domain 4"/>
    <property type="match status" value="1"/>
</dbReference>
<dbReference type="InterPro" id="IPR038932">
    <property type="entry name" value="PARPBP"/>
</dbReference>
<dbReference type="PANTHER" id="PTHR32121">
    <property type="entry name" value="PCNA-INTERACTING PARTNER"/>
    <property type="match status" value="1"/>
</dbReference>
<dbReference type="PANTHER" id="PTHR32121:SF0">
    <property type="entry name" value="PCNA-INTERACTING PARTNER"/>
    <property type="match status" value="1"/>
</dbReference>
<proteinExistence type="evidence at transcript level"/>
<reference key="1">
    <citation type="submission" date="2006-04" db="EMBL/GenBank/DDBJ databases">
        <authorList>
            <consortium name="NIH - Zebrafish Gene Collection (ZGC) project"/>
        </authorList>
    </citation>
    <scope>NUCLEOTIDE SEQUENCE [LARGE SCALE MRNA]</scope>
    <source>
        <tissue>Embryo</tissue>
    </source>
</reference>